<keyword id="KW-0687">Ribonucleoprotein</keyword>
<keyword id="KW-0689">Ribosomal protein</keyword>
<accession>Q8PNS5</accession>
<feature type="chain" id="PRO_0000146635" description="Small ribosomal subunit protein uS10">
    <location>
        <begin position="1"/>
        <end position="103"/>
    </location>
</feature>
<reference key="1">
    <citation type="journal article" date="2002" name="Nature">
        <title>Comparison of the genomes of two Xanthomonas pathogens with differing host specificities.</title>
        <authorList>
            <person name="da Silva A.C.R."/>
            <person name="Ferro J.A."/>
            <person name="Reinach F.C."/>
            <person name="Farah C.S."/>
            <person name="Furlan L.R."/>
            <person name="Quaggio R.B."/>
            <person name="Monteiro-Vitorello C.B."/>
            <person name="Van Sluys M.A."/>
            <person name="Almeida N.F. Jr."/>
            <person name="Alves L.M.C."/>
            <person name="do Amaral A.M."/>
            <person name="Bertolini M.C."/>
            <person name="Camargo L.E.A."/>
            <person name="Camarotte G."/>
            <person name="Cannavan F."/>
            <person name="Cardozo J."/>
            <person name="Chambergo F."/>
            <person name="Ciapina L.P."/>
            <person name="Cicarelli R.M.B."/>
            <person name="Coutinho L.L."/>
            <person name="Cursino-Santos J.R."/>
            <person name="El-Dorry H."/>
            <person name="Faria J.B."/>
            <person name="Ferreira A.J.S."/>
            <person name="Ferreira R.C.C."/>
            <person name="Ferro M.I.T."/>
            <person name="Formighieri E.F."/>
            <person name="Franco M.C."/>
            <person name="Greggio C.C."/>
            <person name="Gruber A."/>
            <person name="Katsuyama A.M."/>
            <person name="Kishi L.T."/>
            <person name="Leite R.P."/>
            <person name="Lemos E.G.M."/>
            <person name="Lemos M.V.F."/>
            <person name="Locali E.C."/>
            <person name="Machado M.A."/>
            <person name="Madeira A.M.B.N."/>
            <person name="Martinez-Rossi N.M."/>
            <person name="Martins E.C."/>
            <person name="Meidanis J."/>
            <person name="Menck C.F.M."/>
            <person name="Miyaki C.Y."/>
            <person name="Moon D.H."/>
            <person name="Moreira L.M."/>
            <person name="Novo M.T.M."/>
            <person name="Okura V.K."/>
            <person name="Oliveira M.C."/>
            <person name="Oliveira V.R."/>
            <person name="Pereira H.A."/>
            <person name="Rossi A."/>
            <person name="Sena J.A.D."/>
            <person name="Silva C."/>
            <person name="de Souza R.F."/>
            <person name="Spinola L.A.F."/>
            <person name="Takita M.A."/>
            <person name="Tamura R.E."/>
            <person name="Teixeira E.C."/>
            <person name="Tezza R.I.D."/>
            <person name="Trindade dos Santos M."/>
            <person name="Truffi D."/>
            <person name="Tsai S.M."/>
            <person name="White F.F."/>
            <person name="Setubal J.C."/>
            <person name="Kitajima J.P."/>
        </authorList>
    </citation>
    <scope>NUCLEOTIDE SEQUENCE [LARGE SCALE GENOMIC DNA]</scope>
    <source>
        <strain>306</strain>
    </source>
</reference>
<comment type="function">
    <text evidence="1">Involved in the binding of tRNA to the ribosomes.</text>
</comment>
<comment type="subunit">
    <text evidence="1">Part of the 30S ribosomal subunit.</text>
</comment>
<comment type="similarity">
    <text evidence="1">Belongs to the universal ribosomal protein uS10 family.</text>
</comment>
<dbReference type="EMBL" id="AE008923">
    <property type="protein sequence ID" value="AAM35854.1"/>
    <property type="molecule type" value="Genomic_DNA"/>
</dbReference>
<dbReference type="RefSeq" id="WP_003486723.1">
    <property type="nucleotide sequence ID" value="NC_003919.1"/>
</dbReference>
<dbReference type="SMR" id="Q8PNS5"/>
<dbReference type="GeneID" id="97210503"/>
<dbReference type="KEGG" id="xac:XAC0971"/>
<dbReference type="eggNOG" id="COG0051">
    <property type="taxonomic scope" value="Bacteria"/>
</dbReference>
<dbReference type="HOGENOM" id="CLU_122625_1_3_6"/>
<dbReference type="Proteomes" id="UP000000576">
    <property type="component" value="Chromosome"/>
</dbReference>
<dbReference type="GO" id="GO:1990904">
    <property type="term" value="C:ribonucleoprotein complex"/>
    <property type="evidence" value="ECO:0007669"/>
    <property type="project" value="UniProtKB-KW"/>
</dbReference>
<dbReference type="GO" id="GO:0005840">
    <property type="term" value="C:ribosome"/>
    <property type="evidence" value="ECO:0007669"/>
    <property type="project" value="UniProtKB-KW"/>
</dbReference>
<dbReference type="GO" id="GO:0003735">
    <property type="term" value="F:structural constituent of ribosome"/>
    <property type="evidence" value="ECO:0007669"/>
    <property type="project" value="InterPro"/>
</dbReference>
<dbReference type="GO" id="GO:0000049">
    <property type="term" value="F:tRNA binding"/>
    <property type="evidence" value="ECO:0007669"/>
    <property type="project" value="UniProtKB-UniRule"/>
</dbReference>
<dbReference type="GO" id="GO:0006412">
    <property type="term" value="P:translation"/>
    <property type="evidence" value="ECO:0007669"/>
    <property type="project" value="UniProtKB-UniRule"/>
</dbReference>
<dbReference type="FunFam" id="3.30.70.600:FF:000001">
    <property type="entry name" value="30S ribosomal protein S10"/>
    <property type="match status" value="1"/>
</dbReference>
<dbReference type="Gene3D" id="3.30.70.600">
    <property type="entry name" value="Ribosomal protein S10 domain"/>
    <property type="match status" value="1"/>
</dbReference>
<dbReference type="HAMAP" id="MF_00508">
    <property type="entry name" value="Ribosomal_uS10"/>
    <property type="match status" value="1"/>
</dbReference>
<dbReference type="InterPro" id="IPR001848">
    <property type="entry name" value="Ribosomal_uS10"/>
</dbReference>
<dbReference type="InterPro" id="IPR018268">
    <property type="entry name" value="Ribosomal_uS10_CS"/>
</dbReference>
<dbReference type="InterPro" id="IPR027486">
    <property type="entry name" value="Ribosomal_uS10_dom"/>
</dbReference>
<dbReference type="InterPro" id="IPR036838">
    <property type="entry name" value="Ribosomal_uS10_dom_sf"/>
</dbReference>
<dbReference type="NCBIfam" id="NF001861">
    <property type="entry name" value="PRK00596.1"/>
    <property type="match status" value="1"/>
</dbReference>
<dbReference type="NCBIfam" id="TIGR01049">
    <property type="entry name" value="rpsJ_bact"/>
    <property type="match status" value="1"/>
</dbReference>
<dbReference type="PANTHER" id="PTHR11700">
    <property type="entry name" value="30S RIBOSOMAL PROTEIN S10 FAMILY MEMBER"/>
    <property type="match status" value="1"/>
</dbReference>
<dbReference type="Pfam" id="PF00338">
    <property type="entry name" value="Ribosomal_S10"/>
    <property type="match status" value="1"/>
</dbReference>
<dbReference type="PRINTS" id="PR00971">
    <property type="entry name" value="RIBOSOMALS10"/>
</dbReference>
<dbReference type="SMART" id="SM01403">
    <property type="entry name" value="Ribosomal_S10"/>
    <property type="match status" value="1"/>
</dbReference>
<dbReference type="SUPFAM" id="SSF54999">
    <property type="entry name" value="Ribosomal protein S10"/>
    <property type="match status" value="1"/>
</dbReference>
<dbReference type="PROSITE" id="PS00361">
    <property type="entry name" value="RIBOSOMAL_S10"/>
    <property type="match status" value="1"/>
</dbReference>
<evidence type="ECO:0000255" key="1">
    <source>
        <dbReference type="HAMAP-Rule" id="MF_00508"/>
    </source>
</evidence>
<evidence type="ECO:0000305" key="2"/>
<organism>
    <name type="scientific">Xanthomonas axonopodis pv. citri (strain 306)</name>
    <dbReference type="NCBI Taxonomy" id="190486"/>
    <lineage>
        <taxon>Bacteria</taxon>
        <taxon>Pseudomonadati</taxon>
        <taxon>Pseudomonadota</taxon>
        <taxon>Gammaproteobacteria</taxon>
        <taxon>Lysobacterales</taxon>
        <taxon>Lysobacteraceae</taxon>
        <taxon>Xanthomonas</taxon>
    </lineage>
</organism>
<gene>
    <name evidence="1" type="primary">rpsJ</name>
    <name type="ordered locus">XAC0971</name>
</gene>
<sequence>MSEQKIRIRLKAFDHRLIDRSASEIVETAKRTGAQVRGPIPLPTKIERYTILVSPHADKDARDQYETRTHKRVLDIVDPNDKTVDALMKLELAAGVDVQIKLT</sequence>
<protein>
    <recommendedName>
        <fullName evidence="1">Small ribosomal subunit protein uS10</fullName>
    </recommendedName>
    <alternativeName>
        <fullName evidence="2">30S ribosomal protein S10</fullName>
    </alternativeName>
</protein>
<name>RS10_XANAC</name>
<proteinExistence type="inferred from homology"/>